<dbReference type="EMBL" id="CP000238">
    <property type="protein sequence ID" value="ABF14056.1"/>
    <property type="molecule type" value="Genomic_DNA"/>
</dbReference>
<dbReference type="RefSeq" id="WP_011520512.1">
    <property type="nucleotide sequence ID" value="NC_007984.1"/>
</dbReference>
<dbReference type="SMR" id="Q1LTD5"/>
<dbReference type="STRING" id="374463.BCI_0331"/>
<dbReference type="KEGG" id="bci:BCI_0331"/>
<dbReference type="HOGENOM" id="CLU_036235_2_1_6"/>
<dbReference type="OrthoDB" id="9778722at2"/>
<dbReference type="Proteomes" id="UP000002427">
    <property type="component" value="Chromosome"/>
</dbReference>
<dbReference type="GO" id="GO:0015934">
    <property type="term" value="C:large ribosomal subunit"/>
    <property type="evidence" value="ECO:0007669"/>
    <property type="project" value="InterPro"/>
</dbReference>
<dbReference type="GO" id="GO:0019843">
    <property type="term" value="F:rRNA binding"/>
    <property type="evidence" value="ECO:0007669"/>
    <property type="project" value="UniProtKB-UniRule"/>
</dbReference>
<dbReference type="GO" id="GO:0003735">
    <property type="term" value="F:structural constituent of ribosome"/>
    <property type="evidence" value="ECO:0007669"/>
    <property type="project" value="InterPro"/>
</dbReference>
<dbReference type="GO" id="GO:0016740">
    <property type="term" value="F:transferase activity"/>
    <property type="evidence" value="ECO:0007669"/>
    <property type="project" value="InterPro"/>
</dbReference>
<dbReference type="GO" id="GO:0002181">
    <property type="term" value="P:cytoplasmic translation"/>
    <property type="evidence" value="ECO:0007669"/>
    <property type="project" value="TreeGrafter"/>
</dbReference>
<dbReference type="FunFam" id="2.30.30.30:FF:000001">
    <property type="entry name" value="50S ribosomal protein L2"/>
    <property type="match status" value="1"/>
</dbReference>
<dbReference type="FunFam" id="2.40.50.140:FF:000003">
    <property type="entry name" value="50S ribosomal protein L2"/>
    <property type="match status" value="1"/>
</dbReference>
<dbReference type="FunFam" id="4.10.950.10:FF:000001">
    <property type="entry name" value="50S ribosomal protein L2"/>
    <property type="match status" value="1"/>
</dbReference>
<dbReference type="Gene3D" id="2.30.30.30">
    <property type="match status" value="1"/>
</dbReference>
<dbReference type="Gene3D" id="2.40.50.140">
    <property type="entry name" value="Nucleic acid-binding proteins"/>
    <property type="match status" value="1"/>
</dbReference>
<dbReference type="Gene3D" id="4.10.950.10">
    <property type="entry name" value="Ribosomal protein L2, domain 3"/>
    <property type="match status" value="1"/>
</dbReference>
<dbReference type="HAMAP" id="MF_01320_B">
    <property type="entry name" value="Ribosomal_uL2_B"/>
    <property type="match status" value="1"/>
</dbReference>
<dbReference type="InterPro" id="IPR012340">
    <property type="entry name" value="NA-bd_OB-fold"/>
</dbReference>
<dbReference type="InterPro" id="IPR014722">
    <property type="entry name" value="Rib_uL2_dom2"/>
</dbReference>
<dbReference type="InterPro" id="IPR002171">
    <property type="entry name" value="Ribosomal_uL2"/>
</dbReference>
<dbReference type="InterPro" id="IPR005880">
    <property type="entry name" value="Ribosomal_uL2_bac/org-type"/>
</dbReference>
<dbReference type="InterPro" id="IPR022669">
    <property type="entry name" value="Ribosomal_uL2_C"/>
</dbReference>
<dbReference type="InterPro" id="IPR022671">
    <property type="entry name" value="Ribosomal_uL2_CS"/>
</dbReference>
<dbReference type="InterPro" id="IPR014726">
    <property type="entry name" value="Ribosomal_uL2_dom3"/>
</dbReference>
<dbReference type="InterPro" id="IPR022666">
    <property type="entry name" value="Ribosomal_uL2_RNA-bd_dom"/>
</dbReference>
<dbReference type="InterPro" id="IPR008991">
    <property type="entry name" value="Translation_prot_SH3-like_sf"/>
</dbReference>
<dbReference type="NCBIfam" id="TIGR01171">
    <property type="entry name" value="rplB_bact"/>
    <property type="match status" value="1"/>
</dbReference>
<dbReference type="PANTHER" id="PTHR13691:SF5">
    <property type="entry name" value="LARGE RIBOSOMAL SUBUNIT PROTEIN UL2M"/>
    <property type="match status" value="1"/>
</dbReference>
<dbReference type="PANTHER" id="PTHR13691">
    <property type="entry name" value="RIBOSOMAL PROTEIN L2"/>
    <property type="match status" value="1"/>
</dbReference>
<dbReference type="Pfam" id="PF00181">
    <property type="entry name" value="Ribosomal_L2"/>
    <property type="match status" value="1"/>
</dbReference>
<dbReference type="Pfam" id="PF03947">
    <property type="entry name" value="Ribosomal_L2_C"/>
    <property type="match status" value="1"/>
</dbReference>
<dbReference type="PIRSF" id="PIRSF002158">
    <property type="entry name" value="Ribosomal_L2"/>
    <property type="match status" value="1"/>
</dbReference>
<dbReference type="SMART" id="SM01383">
    <property type="entry name" value="Ribosomal_L2"/>
    <property type="match status" value="1"/>
</dbReference>
<dbReference type="SMART" id="SM01382">
    <property type="entry name" value="Ribosomal_L2_C"/>
    <property type="match status" value="1"/>
</dbReference>
<dbReference type="SUPFAM" id="SSF50249">
    <property type="entry name" value="Nucleic acid-binding proteins"/>
    <property type="match status" value="1"/>
</dbReference>
<dbReference type="SUPFAM" id="SSF50104">
    <property type="entry name" value="Translation proteins SH3-like domain"/>
    <property type="match status" value="1"/>
</dbReference>
<dbReference type="PROSITE" id="PS00467">
    <property type="entry name" value="RIBOSOMAL_L2"/>
    <property type="match status" value="1"/>
</dbReference>
<gene>
    <name evidence="1" type="primary">rplB</name>
    <name type="ordered locus">BCI_0331</name>
</gene>
<comment type="function">
    <text evidence="1">One of the primary rRNA binding proteins. Required for association of the 30S and 50S subunits to form the 70S ribosome, for tRNA binding and peptide bond formation. It has been suggested to have peptidyltransferase activity; this is somewhat controversial. Makes several contacts with the 16S rRNA in the 70S ribosome.</text>
</comment>
<comment type="subunit">
    <text evidence="1">Part of the 50S ribosomal subunit. Forms a bridge to the 30S subunit in the 70S ribosome.</text>
</comment>
<comment type="similarity">
    <text evidence="1">Belongs to the universal ribosomal protein uL2 family.</text>
</comment>
<protein>
    <recommendedName>
        <fullName evidence="1">Large ribosomal subunit protein uL2</fullName>
    </recommendedName>
    <alternativeName>
        <fullName evidence="3">50S ribosomal protein L2</fullName>
    </alternativeName>
</protein>
<name>RL2_BAUCH</name>
<proteinExistence type="inferred from homology"/>
<organism>
    <name type="scientific">Baumannia cicadellinicola subsp. Homalodisca coagulata</name>
    <dbReference type="NCBI Taxonomy" id="374463"/>
    <lineage>
        <taxon>Bacteria</taxon>
        <taxon>Pseudomonadati</taxon>
        <taxon>Pseudomonadota</taxon>
        <taxon>Gammaproteobacteria</taxon>
        <taxon>Candidatus Palibaumannia</taxon>
    </lineage>
</organism>
<reference key="1">
    <citation type="journal article" date="2006" name="PLoS Biol.">
        <title>Metabolic complementarity and genomics of the dual bacterial symbiosis of sharpshooters.</title>
        <authorList>
            <person name="Wu D."/>
            <person name="Daugherty S.C."/>
            <person name="Van Aken S.E."/>
            <person name="Pai G.H."/>
            <person name="Watkins K.L."/>
            <person name="Khouri H."/>
            <person name="Tallon L.J."/>
            <person name="Zaborsky J.M."/>
            <person name="Dunbar H.E."/>
            <person name="Tran P.L."/>
            <person name="Moran N.A."/>
            <person name="Eisen J.A."/>
        </authorList>
    </citation>
    <scope>NUCLEOTIDE SEQUENCE [LARGE SCALE GENOMIC DNA]</scope>
</reference>
<sequence length="272" mass="30256">MTIVKCKPTSPARRHVIKVVNPELHKGKPFIPLLETISKSGGRNNNGHITTRHVGGGHKQRYRIIDFKRNKDNIAAKIERIEYDPNRSANIALVLYQDGERRYIIAPKGLKVGDQIISGHHATIKTGNTLPIQNIPLGSIVHNVEIKPGKGGQIARSAGASVQIIARDYKYVTLRLRSGEIRRIHSECRATLGEVGNAEHMLRVLGKAGANRWRSIRPTVRGTAMNPVDHPHGGGEGRNFGKHPVSPWGKKTKGKKTRNNRLTDKFIVHRRS</sequence>
<evidence type="ECO:0000255" key="1">
    <source>
        <dbReference type="HAMAP-Rule" id="MF_01320"/>
    </source>
</evidence>
<evidence type="ECO:0000256" key="2">
    <source>
        <dbReference type="SAM" id="MobiDB-lite"/>
    </source>
</evidence>
<evidence type="ECO:0000305" key="3"/>
<keyword id="KW-1185">Reference proteome</keyword>
<keyword id="KW-0687">Ribonucleoprotein</keyword>
<keyword id="KW-0689">Ribosomal protein</keyword>
<keyword id="KW-0694">RNA-binding</keyword>
<keyword id="KW-0699">rRNA-binding</keyword>
<feature type="chain" id="PRO_0000309873" description="Large ribosomal subunit protein uL2">
    <location>
        <begin position="1"/>
        <end position="272"/>
    </location>
</feature>
<feature type="region of interest" description="Disordered" evidence="2">
    <location>
        <begin position="222"/>
        <end position="272"/>
    </location>
</feature>
<feature type="compositionally biased region" description="Basic residues" evidence="2">
    <location>
        <begin position="250"/>
        <end position="259"/>
    </location>
</feature>
<feature type="compositionally biased region" description="Basic and acidic residues" evidence="2">
    <location>
        <begin position="261"/>
        <end position="272"/>
    </location>
</feature>
<accession>Q1LTD5</accession>